<gene>
    <name type="primary">lysS</name>
    <name type="ordered locus">APE_0161.1</name>
</gene>
<organism>
    <name type="scientific">Aeropyrum pernix (strain ATCC 700893 / DSM 11879 / JCM 9820 / NBRC 100138 / K1)</name>
    <dbReference type="NCBI Taxonomy" id="272557"/>
    <lineage>
        <taxon>Archaea</taxon>
        <taxon>Thermoproteota</taxon>
        <taxon>Thermoprotei</taxon>
        <taxon>Desulfurococcales</taxon>
        <taxon>Desulfurococcaceae</taxon>
        <taxon>Aeropyrum</taxon>
    </lineage>
</organism>
<protein>
    <recommendedName>
        <fullName>Lysine--tRNA ligase</fullName>
        <ecNumber>6.1.1.6</ecNumber>
    </recommendedName>
    <alternativeName>
        <fullName>Lysyl-tRNA synthetase</fullName>
        <shortName>LysRS</shortName>
    </alternativeName>
</protein>
<feature type="chain" id="PRO_0000152746" description="Lysine--tRNA ligase">
    <location>
        <begin position="1"/>
        <end position="545"/>
    </location>
</feature>
<feature type="short sequence motif" description="'HIGH' region">
    <location>
        <begin position="33"/>
        <end position="41"/>
    </location>
</feature>
<feature type="short sequence motif" description="'KMSKS' region">
    <location>
        <begin position="288"/>
        <end position="292"/>
    </location>
</feature>
<reference key="1">
    <citation type="journal article" date="1999" name="DNA Res.">
        <title>Complete genome sequence of an aerobic hyper-thermophilic crenarchaeon, Aeropyrum pernix K1.</title>
        <authorList>
            <person name="Kawarabayasi Y."/>
            <person name="Hino Y."/>
            <person name="Horikawa H."/>
            <person name="Yamazaki S."/>
            <person name="Haikawa Y."/>
            <person name="Jin-no K."/>
            <person name="Takahashi M."/>
            <person name="Sekine M."/>
            <person name="Baba S."/>
            <person name="Ankai A."/>
            <person name="Kosugi H."/>
            <person name="Hosoyama A."/>
            <person name="Fukui S."/>
            <person name="Nagai Y."/>
            <person name="Nishijima K."/>
            <person name="Nakazawa H."/>
            <person name="Takamiya M."/>
            <person name="Masuda S."/>
            <person name="Funahashi T."/>
            <person name="Tanaka T."/>
            <person name="Kudoh Y."/>
            <person name="Yamazaki J."/>
            <person name="Kushida N."/>
            <person name="Oguchi A."/>
            <person name="Aoki K."/>
            <person name="Kubota K."/>
            <person name="Nakamura Y."/>
            <person name="Nomura N."/>
            <person name="Sako Y."/>
            <person name="Kikuchi H."/>
        </authorList>
    </citation>
    <scope>NUCLEOTIDE SEQUENCE [LARGE SCALE GENOMIC DNA]</scope>
    <source>
        <strain>ATCC 700893 / DSM 11879 / JCM 9820 / NBRC 100138 / K1</strain>
    </source>
</reference>
<sequence>MPVHWVDKLVAELEAKLQNRGKDEYIFNGGLSVSGLQHIGRLRGEVLLGEAVRRELEKRGFRVKQLLTLYTVDPWKGKDEQRREFPDPKAAERYVGWPLDRVPDPKGCHASWVDHFWSDFGPYIGVFTDGKIEVVTTRELYKGRLKEFITTMVLPRRDEIRRVINKYRGRKPYQEGWIPLEPRCARCGRIDSTEALEILGGERVRYRCSYCGYQGESSIEDSKLNWRIEWAGVWWSLGVDFEPYGKDHATPGGSRDSAAELARLLGFEPPEGVWYEWVSLRAGGREADMSSSGFTGITPREWLDIAHPQILRFIYFLHPPTRRVVVDLSEIPSYYSQYYRAERIYFGIEEASTVEETRYLARTYELSHPSNPPAKPPSQIPYSHAAIVAQVVGPERLWTDGLERLKRAGLLGHDEYSIRWAKELLEKAYKWARRYAPKHLKFEIPDSPPEDALRRIEKPDLLEKLAEVLESVEEWSEERIKQALVEFGEGMSSSERRRFYRDFYLAIVGRPEGPRAAPLLSLMDRGFVVDRLRKAANLSRELKGR</sequence>
<keyword id="KW-0030">Aminoacyl-tRNA synthetase</keyword>
<keyword id="KW-0067">ATP-binding</keyword>
<keyword id="KW-0963">Cytoplasm</keyword>
<keyword id="KW-0436">Ligase</keyword>
<keyword id="KW-0547">Nucleotide-binding</keyword>
<keyword id="KW-0648">Protein biosynthesis</keyword>
<keyword id="KW-1185">Reference proteome</keyword>
<dbReference type="EC" id="6.1.1.6"/>
<dbReference type="EMBL" id="BA000002">
    <property type="protein sequence ID" value="BAA79072.2"/>
    <property type="molecule type" value="Genomic_DNA"/>
</dbReference>
<dbReference type="PIR" id="F72771">
    <property type="entry name" value="F72771"/>
</dbReference>
<dbReference type="RefSeq" id="WP_010865537.1">
    <property type="nucleotide sequence ID" value="NC_000854.2"/>
</dbReference>
<dbReference type="SMR" id="Q9YFT9"/>
<dbReference type="STRING" id="272557.APE_0161.1"/>
<dbReference type="EnsemblBacteria" id="BAA79072">
    <property type="protein sequence ID" value="BAA79072"/>
    <property type="gene ID" value="APE_0161.1"/>
</dbReference>
<dbReference type="GeneID" id="1445693"/>
<dbReference type="KEGG" id="ape:APE_0161.1"/>
<dbReference type="PATRIC" id="fig|272557.25.peg.115"/>
<dbReference type="eggNOG" id="arCOG00485">
    <property type="taxonomic scope" value="Archaea"/>
</dbReference>
<dbReference type="BRENDA" id="6.1.1.6">
    <property type="organism ID" value="171"/>
</dbReference>
<dbReference type="Proteomes" id="UP000002518">
    <property type="component" value="Chromosome"/>
</dbReference>
<dbReference type="GO" id="GO:0005737">
    <property type="term" value="C:cytoplasm"/>
    <property type="evidence" value="ECO:0007669"/>
    <property type="project" value="UniProtKB-SubCell"/>
</dbReference>
<dbReference type="GO" id="GO:0005524">
    <property type="term" value="F:ATP binding"/>
    <property type="evidence" value="ECO:0007669"/>
    <property type="project" value="UniProtKB-UniRule"/>
</dbReference>
<dbReference type="GO" id="GO:0004824">
    <property type="term" value="F:lysine-tRNA ligase activity"/>
    <property type="evidence" value="ECO:0007669"/>
    <property type="project" value="UniProtKB-UniRule"/>
</dbReference>
<dbReference type="GO" id="GO:0000049">
    <property type="term" value="F:tRNA binding"/>
    <property type="evidence" value="ECO:0007669"/>
    <property type="project" value="InterPro"/>
</dbReference>
<dbReference type="GO" id="GO:0006430">
    <property type="term" value="P:lysyl-tRNA aminoacylation"/>
    <property type="evidence" value="ECO:0007669"/>
    <property type="project" value="UniProtKB-UniRule"/>
</dbReference>
<dbReference type="Gene3D" id="1.10.10.350">
    <property type="match status" value="1"/>
</dbReference>
<dbReference type="Gene3D" id="1.10.10.770">
    <property type="match status" value="1"/>
</dbReference>
<dbReference type="Gene3D" id="3.40.50.620">
    <property type="entry name" value="HUPs"/>
    <property type="match status" value="2"/>
</dbReference>
<dbReference type="HAMAP" id="MF_00177">
    <property type="entry name" value="Lys_tRNA_synth_class1"/>
    <property type="match status" value="1"/>
</dbReference>
<dbReference type="InterPro" id="IPR045462">
    <property type="entry name" value="aa-tRNA-synth_I_cd-bd"/>
</dbReference>
<dbReference type="InterPro" id="IPR020751">
    <property type="entry name" value="aa-tRNA-synth_I_codon-bd_sub2"/>
</dbReference>
<dbReference type="InterPro" id="IPR008925">
    <property type="entry name" value="aa_tRNA-synth_I_cd-bd_sf"/>
</dbReference>
<dbReference type="InterPro" id="IPR002904">
    <property type="entry name" value="Lys-tRNA-ligase"/>
</dbReference>
<dbReference type="InterPro" id="IPR014729">
    <property type="entry name" value="Rossmann-like_a/b/a_fold"/>
</dbReference>
<dbReference type="NCBIfam" id="TIGR00467">
    <property type="entry name" value="lysS_arch"/>
    <property type="match status" value="1"/>
</dbReference>
<dbReference type="PANTHER" id="PTHR37940">
    <property type="entry name" value="LYSINE--TRNA LIGASE"/>
    <property type="match status" value="1"/>
</dbReference>
<dbReference type="PANTHER" id="PTHR37940:SF1">
    <property type="entry name" value="LYSINE--TRNA LIGASE"/>
    <property type="match status" value="1"/>
</dbReference>
<dbReference type="Pfam" id="PF19269">
    <property type="entry name" value="Anticodon_2"/>
    <property type="match status" value="1"/>
</dbReference>
<dbReference type="Pfam" id="PF01921">
    <property type="entry name" value="tRNA-synt_1f"/>
    <property type="match status" value="1"/>
</dbReference>
<dbReference type="SUPFAM" id="SSF48163">
    <property type="entry name" value="An anticodon-binding domain of class I aminoacyl-tRNA synthetases"/>
    <property type="match status" value="1"/>
</dbReference>
<dbReference type="SUPFAM" id="SSF52374">
    <property type="entry name" value="Nucleotidylyl transferase"/>
    <property type="match status" value="1"/>
</dbReference>
<evidence type="ECO:0000250" key="1"/>
<evidence type="ECO:0000305" key="2"/>
<proteinExistence type="inferred from homology"/>
<name>SYK_AERPE</name>
<accession>Q9YFT9</accession>
<comment type="catalytic activity">
    <reaction>
        <text>tRNA(Lys) + L-lysine + ATP = L-lysyl-tRNA(Lys) + AMP + diphosphate</text>
        <dbReference type="Rhea" id="RHEA:20792"/>
        <dbReference type="Rhea" id="RHEA-COMP:9696"/>
        <dbReference type="Rhea" id="RHEA-COMP:9697"/>
        <dbReference type="ChEBI" id="CHEBI:30616"/>
        <dbReference type="ChEBI" id="CHEBI:32551"/>
        <dbReference type="ChEBI" id="CHEBI:33019"/>
        <dbReference type="ChEBI" id="CHEBI:78442"/>
        <dbReference type="ChEBI" id="CHEBI:78529"/>
        <dbReference type="ChEBI" id="CHEBI:456215"/>
        <dbReference type="EC" id="6.1.1.6"/>
    </reaction>
</comment>
<comment type="subcellular location">
    <subcellularLocation>
        <location evidence="1">Cytoplasm</location>
    </subcellularLocation>
</comment>
<comment type="similarity">
    <text evidence="2">Belongs to the class-I aminoacyl-tRNA synthetase family.</text>
</comment>